<evidence type="ECO:0000250" key="1"/>
<evidence type="ECO:0000255" key="2">
    <source>
        <dbReference type="PROSITE-ProRule" id="PRU00159"/>
    </source>
</evidence>
<evidence type="ECO:0000255" key="3">
    <source>
        <dbReference type="PROSITE-ProRule" id="PRU10027"/>
    </source>
</evidence>
<evidence type="ECO:0000305" key="4"/>
<comment type="catalytic activity">
    <reaction>
        <text>L-seryl-[protein] + ATP = O-phospho-L-seryl-[protein] + ADP + H(+)</text>
        <dbReference type="Rhea" id="RHEA:17989"/>
        <dbReference type="Rhea" id="RHEA-COMP:9863"/>
        <dbReference type="Rhea" id="RHEA-COMP:11604"/>
        <dbReference type="ChEBI" id="CHEBI:15378"/>
        <dbReference type="ChEBI" id="CHEBI:29999"/>
        <dbReference type="ChEBI" id="CHEBI:30616"/>
        <dbReference type="ChEBI" id="CHEBI:83421"/>
        <dbReference type="ChEBI" id="CHEBI:456216"/>
        <dbReference type="EC" id="2.7.11.24"/>
    </reaction>
</comment>
<comment type="catalytic activity">
    <reaction>
        <text>L-threonyl-[protein] + ATP = O-phospho-L-threonyl-[protein] + ADP + H(+)</text>
        <dbReference type="Rhea" id="RHEA:46608"/>
        <dbReference type="Rhea" id="RHEA-COMP:11060"/>
        <dbReference type="Rhea" id="RHEA-COMP:11605"/>
        <dbReference type="ChEBI" id="CHEBI:15378"/>
        <dbReference type="ChEBI" id="CHEBI:30013"/>
        <dbReference type="ChEBI" id="CHEBI:30616"/>
        <dbReference type="ChEBI" id="CHEBI:61977"/>
        <dbReference type="ChEBI" id="CHEBI:456216"/>
        <dbReference type="EC" id="2.7.11.24"/>
    </reaction>
</comment>
<comment type="activity regulation">
    <text evidence="1">Activated by threonine and tyrosine phosphorylation.</text>
</comment>
<comment type="domain">
    <text>The TXY motif contains the threonine and tyrosine residues whose phosphorylation activates the MAP kinases.</text>
</comment>
<comment type="PTM">
    <text evidence="1">Dually phosphorylated on Thr-201 and Tyr-203, which activates the enzyme.</text>
</comment>
<comment type="similarity">
    <text evidence="4">Belongs to the protein kinase superfamily. CMGC Ser/Thr protein kinase family. MAP kinase subfamily.</text>
</comment>
<comment type="sequence caution" evidence="4">
    <conflict type="erroneous gene model prediction">
        <sequence resource="EMBL-CDS" id="AAM88622"/>
    </conflict>
</comment>
<comment type="sequence caution" evidence="4">
    <conflict type="frameshift">
        <sequence resource="EMBL" id="AK111579"/>
    </conflict>
</comment>
<sequence>MDSSSGGAGGGGGAQIKGMGTHGGRYVLYNVYGNFFEVSSKYAPPIRPIGRGAYGIVCAAVNSENGEEVAIKKIGNAFDNHIDAKRTLREIKLLRHMDHENIIAIKDIIRPPRRDNFNDVYIVSELMDTDLHQIIRSNQPLTDDHCQYFLYQLLRGLKYVHSANVLHRDLKPSNLFLNANCDLKIADFGLARTTTETDLMTEYVVTRWYRAPELLLNCSQYTAAIDVWSVGCILGEIVTRQPLFPGRDYIQQLKLITELIGSPDDSSLGFLRSDNARRYMKQLPQYPRQDFRLRFRNMSAGAVDLLEKMLVFDPSRRITVDEALHHPYLASLHDINEEPTCPAPFSFDFEQPSFTEEHIKELIWRESLAFNPDPPY</sequence>
<proteinExistence type="evidence at transcript level"/>
<keyword id="KW-0067">ATP-binding</keyword>
<keyword id="KW-0418">Kinase</keyword>
<keyword id="KW-0547">Nucleotide-binding</keyword>
<keyword id="KW-0597">Phosphoprotein</keyword>
<keyword id="KW-1185">Reference proteome</keyword>
<keyword id="KW-0723">Serine/threonine-protein kinase</keyword>
<keyword id="KW-0808">Transferase</keyword>
<protein>
    <recommendedName>
        <fullName>Mitogen-activated protein kinase 6</fullName>
        <shortName>MAP kinase 6</shortName>
        <ecNumber>2.7.11.24</ecNumber>
    </recommendedName>
</protein>
<accession>Q336X9</accession>
<accession>A0A0P0XX33</accession>
<accession>Q0IW45</accession>
<accession>Q8LN33</accession>
<feature type="chain" id="PRO_0000239749" description="Mitogen-activated protein kinase 6">
    <location>
        <begin position="1"/>
        <end position="376"/>
    </location>
</feature>
<feature type="domain" description="Protein kinase" evidence="2">
    <location>
        <begin position="43"/>
        <end position="329"/>
    </location>
</feature>
<feature type="short sequence motif" description="TXY">
    <location>
        <begin position="201"/>
        <end position="203"/>
    </location>
</feature>
<feature type="active site" description="Proton acceptor" evidence="2 3">
    <location>
        <position position="169"/>
    </location>
</feature>
<feature type="binding site" evidence="2">
    <location>
        <begin position="49"/>
        <end position="57"/>
    </location>
    <ligand>
        <name>ATP</name>
        <dbReference type="ChEBI" id="CHEBI:30616"/>
    </ligand>
</feature>
<feature type="binding site" evidence="2">
    <location>
        <position position="72"/>
    </location>
    <ligand>
        <name>ATP</name>
        <dbReference type="ChEBI" id="CHEBI:30616"/>
    </ligand>
</feature>
<feature type="modified residue" description="Phosphothreonine" evidence="1">
    <location>
        <position position="201"/>
    </location>
</feature>
<feature type="modified residue" description="Phosphotyrosine" evidence="4">
    <location>
        <position position="203"/>
    </location>
</feature>
<organism>
    <name type="scientific">Oryza sativa subsp. japonica</name>
    <name type="common">Rice</name>
    <dbReference type="NCBI Taxonomy" id="39947"/>
    <lineage>
        <taxon>Eukaryota</taxon>
        <taxon>Viridiplantae</taxon>
        <taxon>Streptophyta</taxon>
        <taxon>Embryophyta</taxon>
        <taxon>Tracheophyta</taxon>
        <taxon>Spermatophyta</taxon>
        <taxon>Magnoliopsida</taxon>
        <taxon>Liliopsida</taxon>
        <taxon>Poales</taxon>
        <taxon>Poaceae</taxon>
        <taxon>BOP clade</taxon>
        <taxon>Oryzoideae</taxon>
        <taxon>Oryzeae</taxon>
        <taxon>Oryzinae</taxon>
        <taxon>Oryza</taxon>
        <taxon>Oryza sativa</taxon>
    </lineage>
</organism>
<reference key="1">
    <citation type="journal article" date="2003" name="Science">
        <title>In-depth view of structure, activity, and evolution of rice chromosome 10.</title>
        <authorList>
            <person name="Yu Y."/>
            <person name="Rambo T."/>
            <person name="Currie J."/>
            <person name="Saski C."/>
            <person name="Kim H.-R."/>
            <person name="Collura K."/>
            <person name="Thompson S."/>
            <person name="Simmons J."/>
            <person name="Yang T.-J."/>
            <person name="Nah G."/>
            <person name="Patel A.J."/>
            <person name="Thurmond S."/>
            <person name="Henry D."/>
            <person name="Oates R."/>
            <person name="Palmer M."/>
            <person name="Pries G."/>
            <person name="Gibson J."/>
            <person name="Anderson H."/>
            <person name="Paradkar M."/>
            <person name="Crane L."/>
            <person name="Dale J."/>
            <person name="Carver M.B."/>
            <person name="Wood T."/>
            <person name="Frisch D."/>
            <person name="Engler F."/>
            <person name="Soderlund C."/>
            <person name="Palmer L.E."/>
            <person name="Teytelman L."/>
            <person name="Nascimento L."/>
            <person name="De la Bastide M."/>
            <person name="Spiegel L."/>
            <person name="Ware D."/>
            <person name="O'Shaughnessy A."/>
            <person name="Dike S."/>
            <person name="Dedhia N."/>
            <person name="Preston R."/>
            <person name="Huang E."/>
            <person name="Ferraro K."/>
            <person name="Kuit K."/>
            <person name="Miller B."/>
            <person name="Zutavern T."/>
            <person name="Katzenberger F."/>
            <person name="Muller S."/>
            <person name="Balija V."/>
            <person name="Martienssen R.A."/>
            <person name="Stein L."/>
            <person name="Minx P."/>
            <person name="Johnson D."/>
            <person name="Cordum H."/>
            <person name="Mardis E."/>
            <person name="Cheng Z."/>
            <person name="Jiang J."/>
            <person name="Wilson R."/>
            <person name="McCombie W.R."/>
            <person name="Wing R.A."/>
            <person name="Yuan Q."/>
            <person name="Ouyang S."/>
            <person name="Liu J."/>
            <person name="Jones K.M."/>
            <person name="Gansberger K."/>
            <person name="Moffat K."/>
            <person name="Hill J."/>
            <person name="Tsitrin T."/>
            <person name="Overton L."/>
            <person name="Bera J."/>
            <person name="Kim M."/>
            <person name="Jin S."/>
            <person name="Tallon L."/>
            <person name="Ciecko A."/>
            <person name="Pai G."/>
            <person name="Van Aken S."/>
            <person name="Utterback T."/>
            <person name="Reidmuller S."/>
            <person name="Bormann J."/>
            <person name="Feldblyum T."/>
            <person name="Hsiao J."/>
            <person name="Zismann V."/>
            <person name="Blunt S."/>
            <person name="de Vazeille A.R."/>
            <person name="Shaffer T."/>
            <person name="Koo H."/>
            <person name="Suh B."/>
            <person name="Yang Q."/>
            <person name="Haas B."/>
            <person name="Peterson J."/>
            <person name="Pertea M."/>
            <person name="Volfovsky N."/>
            <person name="Wortman J."/>
            <person name="White O."/>
            <person name="Salzberg S.L."/>
            <person name="Fraser C.M."/>
            <person name="Buell C.R."/>
            <person name="Messing J."/>
            <person name="Song R."/>
            <person name="Fuks G."/>
            <person name="Llaca V."/>
            <person name="Kovchak S."/>
            <person name="Young S."/>
            <person name="Bowers J.E."/>
            <person name="Paterson A.H."/>
            <person name="Johns M.A."/>
            <person name="Mao L."/>
            <person name="Pan H."/>
            <person name="Dean R.A."/>
        </authorList>
    </citation>
    <scope>NUCLEOTIDE SEQUENCE [LARGE SCALE GENOMIC DNA]</scope>
    <source>
        <strain>cv. Nipponbare</strain>
    </source>
</reference>
<reference key="2">
    <citation type="journal article" date="2005" name="Nature">
        <title>The map-based sequence of the rice genome.</title>
        <authorList>
            <consortium name="International rice genome sequencing project (IRGSP)"/>
        </authorList>
    </citation>
    <scope>NUCLEOTIDE SEQUENCE [LARGE SCALE GENOMIC DNA]</scope>
    <source>
        <strain>cv. Nipponbare</strain>
    </source>
</reference>
<reference key="3">
    <citation type="journal article" date="2008" name="Nucleic Acids Res.">
        <title>The rice annotation project database (RAP-DB): 2008 update.</title>
        <authorList>
            <consortium name="The rice annotation project (RAP)"/>
        </authorList>
    </citation>
    <scope>GENOME REANNOTATION</scope>
    <source>
        <strain>cv. Nipponbare</strain>
    </source>
</reference>
<reference key="4">
    <citation type="journal article" date="2013" name="Rice">
        <title>Improvement of the Oryza sativa Nipponbare reference genome using next generation sequence and optical map data.</title>
        <authorList>
            <person name="Kawahara Y."/>
            <person name="de la Bastide M."/>
            <person name="Hamilton J.P."/>
            <person name="Kanamori H."/>
            <person name="McCombie W.R."/>
            <person name="Ouyang S."/>
            <person name="Schwartz D.C."/>
            <person name="Tanaka T."/>
            <person name="Wu J."/>
            <person name="Zhou S."/>
            <person name="Childs K.L."/>
            <person name="Davidson R.M."/>
            <person name="Lin H."/>
            <person name="Quesada-Ocampo L."/>
            <person name="Vaillancourt B."/>
            <person name="Sakai H."/>
            <person name="Lee S.S."/>
            <person name="Kim J."/>
            <person name="Numa H."/>
            <person name="Itoh T."/>
            <person name="Buell C.R."/>
            <person name="Matsumoto T."/>
        </authorList>
    </citation>
    <scope>GENOME REANNOTATION</scope>
    <source>
        <strain>cv. Nipponbare</strain>
    </source>
</reference>
<reference key="5">
    <citation type="journal article" date="2003" name="Science">
        <title>Collection, mapping, and annotation of over 28,000 cDNA clones from japonica rice.</title>
        <authorList>
            <consortium name="The rice full-length cDNA consortium"/>
        </authorList>
    </citation>
    <scope>NUCLEOTIDE SEQUENCE [LARGE SCALE MRNA]</scope>
    <source>
        <strain>cv. Nipponbare</strain>
    </source>
</reference>
<reference key="6">
    <citation type="journal article" date="2006" name="Mol. Plant Microbe Interact.">
        <title>Molecular analysis of the rice MAP kinase gene family in relation to Magnaporthe grisea infection.</title>
        <authorList>
            <person name="Reyna N.S."/>
            <person name="Yang Y."/>
        </authorList>
    </citation>
    <scope>NOMENCLATURE</scope>
</reference>
<dbReference type="EC" id="2.7.11.24"/>
<dbReference type="EMBL" id="AC092389">
    <property type="protein sequence ID" value="AAM88622.1"/>
    <property type="status" value="ALT_SEQ"/>
    <property type="molecule type" value="Genomic_DNA"/>
</dbReference>
<dbReference type="EMBL" id="DP000086">
    <property type="protein sequence ID" value="ABB47925.1"/>
    <property type="molecule type" value="Genomic_DNA"/>
</dbReference>
<dbReference type="EMBL" id="AP008216">
    <property type="protein sequence ID" value="BAF27070.1"/>
    <property type="molecule type" value="Genomic_DNA"/>
</dbReference>
<dbReference type="EMBL" id="AP014966">
    <property type="protein sequence ID" value="BAT11800.1"/>
    <property type="molecule type" value="Genomic_DNA"/>
</dbReference>
<dbReference type="EMBL" id="AK111579">
    <property type="status" value="NOT_ANNOTATED_CDS"/>
    <property type="molecule type" value="mRNA"/>
</dbReference>
<dbReference type="RefSeq" id="XP_015615011.1">
    <property type="nucleotide sequence ID" value="XM_015759525.1"/>
</dbReference>
<dbReference type="SMR" id="Q336X9"/>
<dbReference type="FunCoup" id="Q336X9">
    <property type="interactions" value="2092"/>
</dbReference>
<dbReference type="IntAct" id="Q336X9">
    <property type="interactions" value="1"/>
</dbReference>
<dbReference type="MINT" id="Q336X9"/>
<dbReference type="STRING" id="39947.Q336X9"/>
<dbReference type="PaxDb" id="39947-Q336X9"/>
<dbReference type="EnsemblPlants" id="Os10t0533600-01">
    <property type="protein sequence ID" value="Os10t0533600-01"/>
    <property type="gene ID" value="Os10g0533600"/>
</dbReference>
<dbReference type="Gramene" id="Os10t0533600-01">
    <property type="protein sequence ID" value="Os10t0533600-01"/>
    <property type="gene ID" value="Os10g0533600"/>
</dbReference>
<dbReference type="KEGG" id="dosa:Os10g0533600"/>
<dbReference type="eggNOG" id="KOG0660">
    <property type="taxonomic scope" value="Eukaryota"/>
</dbReference>
<dbReference type="HOGENOM" id="CLU_000288_181_1_1"/>
<dbReference type="InParanoid" id="Q336X9"/>
<dbReference type="OMA" id="SFFDFDY"/>
<dbReference type="OrthoDB" id="192887at2759"/>
<dbReference type="PlantReactome" id="R-OSA-6788019">
    <property type="pathway name" value="Salicylic acid signaling"/>
</dbReference>
<dbReference type="Proteomes" id="UP000000763">
    <property type="component" value="Chromosome 10"/>
</dbReference>
<dbReference type="Proteomes" id="UP000059680">
    <property type="component" value="Chromosome 10"/>
</dbReference>
<dbReference type="GO" id="GO:0005737">
    <property type="term" value="C:cytoplasm"/>
    <property type="evidence" value="ECO:0000318"/>
    <property type="project" value="GO_Central"/>
</dbReference>
<dbReference type="GO" id="GO:0005634">
    <property type="term" value="C:nucleus"/>
    <property type="evidence" value="ECO:0000318"/>
    <property type="project" value="GO_Central"/>
</dbReference>
<dbReference type="GO" id="GO:0005524">
    <property type="term" value="F:ATP binding"/>
    <property type="evidence" value="ECO:0007669"/>
    <property type="project" value="UniProtKB-KW"/>
</dbReference>
<dbReference type="GO" id="GO:0004707">
    <property type="term" value="F:MAP kinase activity"/>
    <property type="evidence" value="ECO:0007669"/>
    <property type="project" value="UniProtKB-EC"/>
</dbReference>
<dbReference type="GO" id="GO:0106310">
    <property type="term" value="F:protein serine kinase activity"/>
    <property type="evidence" value="ECO:0007669"/>
    <property type="project" value="RHEA"/>
</dbReference>
<dbReference type="GO" id="GO:0004674">
    <property type="term" value="F:protein serine/threonine kinase activity"/>
    <property type="evidence" value="ECO:0000318"/>
    <property type="project" value="GO_Central"/>
</dbReference>
<dbReference type="GO" id="GO:0035556">
    <property type="term" value="P:intracellular signal transduction"/>
    <property type="evidence" value="ECO:0000318"/>
    <property type="project" value="GO_Central"/>
</dbReference>
<dbReference type="CDD" id="cd07858">
    <property type="entry name" value="STKc_TEY_MAPK"/>
    <property type="match status" value="1"/>
</dbReference>
<dbReference type="FunFam" id="1.10.510.10:FF:000013">
    <property type="entry name" value="Mitogen-activated protein kinase"/>
    <property type="match status" value="1"/>
</dbReference>
<dbReference type="FunFam" id="3.30.200.20:FF:000046">
    <property type="entry name" value="Mitogen-activated protein kinase"/>
    <property type="match status" value="1"/>
</dbReference>
<dbReference type="Gene3D" id="3.30.200.20">
    <property type="entry name" value="Phosphorylase Kinase, domain 1"/>
    <property type="match status" value="1"/>
</dbReference>
<dbReference type="Gene3D" id="1.10.510.10">
    <property type="entry name" value="Transferase(Phosphotransferase) domain 1"/>
    <property type="match status" value="1"/>
</dbReference>
<dbReference type="InterPro" id="IPR011009">
    <property type="entry name" value="Kinase-like_dom_sf"/>
</dbReference>
<dbReference type="InterPro" id="IPR050117">
    <property type="entry name" value="MAP_kinase"/>
</dbReference>
<dbReference type="InterPro" id="IPR003527">
    <property type="entry name" value="MAP_kinase_CS"/>
</dbReference>
<dbReference type="InterPro" id="IPR000719">
    <property type="entry name" value="Prot_kinase_dom"/>
</dbReference>
<dbReference type="InterPro" id="IPR017441">
    <property type="entry name" value="Protein_kinase_ATP_BS"/>
</dbReference>
<dbReference type="InterPro" id="IPR008271">
    <property type="entry name" value="Ser/Thr_kinase_AS"/>
</dbReference>
<dbReference type="PANTHER" id="PTHR24055">
    <property type="entry name" value="MITOGEN-ACTIVATED PROTEIN KINASE"/>
    <property type="match status" value="1"/>
</dbReference>
<dbReference type="Pfam" id="PF00069">
    <property type="entry name" value="Pkinase"/>
    <property type="match status" value="1"/>
</dbReference>
<dbReference type="SMART" id="SM00220">
    <property type="entry name" value="S_TKc"/>
    <property type="match status" value="1"/>
</dbReference>
<dbReference type="SUPFAM" id="SSF56112">
    <property type="entry name" value="Protein kinase-like (PK-like)"/>
    <property type="match status" value="1"/>
</dbReference>
<dbReference type="PROSITE" id="PS01351">
    <property type="entry name" value="MAPK"/>
    <property type="match status" value="1"/>
</dbReference>
<dbReference type="PROSITE" id="PS00107">
    <property type="entry name" value="PROTEIN_KINASE_ATP"/>
    <property type="match status" value="1"/>
</dbReference>
<dbReference type="PROSITE" id="PS50011">
    <property type="entry name" value="PROTEIN_KINASE_DOM"/>
    <property type="match status" value="1"/>
</dbReference>
<dbReference type="PROSITE" id="PS00108">
    <property type="entry name" value="PROTEIN_KINASE_ST"/>
    <property type="match status" value="1"/>
</dbReference>
<name>MPK6_ORYSJ</name>
<gene>
    <name type="primary">MPK6</name>
    <name type="ordered locus">Os10g0533600</name>
    <name type="ordered locus">LOC_Os10g38950</name>
    <name type="ORF">OSJNBa0053C23.4</name>
</gene>